<reference key="1">
    <citation type="submission" date="1991-05" db="EMBL/GenBank/DDBJ databases">
        <authorList>
            <person name="Oezcan S."/>
            <person name="Ciriacy M."/>
        </authorList>
    </citation>
    <scope>NUCLEOTIDE SEQUENCE [GENOMIC DNA]</scope>
    <source>
        <strain>MC 971 B</strain>
    </source>
</reference>
<reference key="2">
    <citation type="journal article" date="1994" name="Science">
        <title>Complete nucleotide sequence of Saccharomyces cerevisiae chromosome VIII.</title>
        <authorList>
            <person name="Johnston M."/>
            <person name="Andrews S."/>
            <person name="Brinkman R."/>
            <person name="Cooper J."/>
            <person name="Ding H."/>
            <person name="Dover J."/>
            <person name="Du Z."/>
            <person name="Favello A."/>
            <person name="Fulton L."/>
            <person name="Gattung S."/>
            <person name="Geisel C."/>
            <person name="Kirsten J."/>
            <person name="Kucaba T."/>
            <person name="Hillier L.W."/>
            <person name="Jier M."/>
            <person name="Johnston L."/>
            <person name="Langston Y."/>
            <person name="Latreille P."/>
            <person name="Louis E.J."/>
            <person name="Macri C."/>
            <person name="Mardis E."/>
            <person name="Menezes S."/>
            <person name="Mouser L."/>
            <person name="Nhan M."/>
            <person name="Rifkin L."/>
            <person name="Riles L."/>
            <person name="St Peter H."/>
            <person name="Trevaskis E."/>
            <person name="Vaughan K."/>
            <person name="Vignati D."/>
            <person name="Wilcox L."/>
            <person name="Wohldman P."/>
            <person name="Waterston R."/>
            <person name="Wilson R."/>
            <person name="Vaudin M."/>
        </authorList>
    </citation>
    <scope>NUCLEOTIDE SEQUENCE [LARGE SCALE GENOMIC DNA]</scope>
    <source>
        <strain>ATCC 204508 / S288c</strain>
    </source>
</reference>
<reference key="3">
    <citation type="journal article" date="2014" name="G3 (Bethesda)">
        <title>The reference genome sequence of Saccharomyces cerevisiae: Then and now.</title>
        <authorList>
            <person name="Engel S.R."/>
            <person name="Dietrich F.S."/>
            <person name="Fisk D.G."/>
            <person name="Binkley G."/>
            <person name="Balakrishnan R."/>
            <person name="Costanzo M.C."/>
            <person name="Dwight S.S."/>
            <person name="Hitz B.C."/>
            <person name="Karra K."/>
            <person name="Nash R.S."/>
            <person name="Weng S."/>
            <person name="Wong E.D."/>
            <person name="Lloyd P."/>
            <person name="Skrzypek M.S."/>
            <person name="Miyasato S.R."/>
            <person name="Simison M."/>
            <person name="Cherry J.M."/>
        </authorList>
    </citation>
    <scope>GENOME REANNOTATION</scope>
    <source>
        <strain>ATCC 204508 / S288c</strain>
    </source>
</reference>
<reference key="4">
    <citation type="journal article" date="2007" name="Genome Res.">
        <title>Approaching a complete repository of sequence-verified protein-encoding clones for Saccharomyces cerevisiae.</title>
        <authorList>
            <person name="Hu Y."/>
            <person name="Rolfs A."/>
            <person name="Bhullar B."/>
            <person name="Murthy T.V.S."/>
            <person name="Zhu C."/>
            <person name="Berger M.F."/>
            <person name="Camargo A.A."/>
            <person name="Kelley F."/>
            <person name="McCarron S."/>
            <person name="Jepson D."/>
            <person name="Richardson A."/>
            <person name="Raphael J."/>
            <person name="Moreira D."/>
            <person name="Taycher E."/>
            <person name="Zuo D."/>
            <person name="Mohr S."/>
            <person name="Kane M.F."/>
            <person name="Williamson J."/>
            <person name="Simpson A.J.G."/>
            <person name="Bulyk M.L."/>
            <person name="Harlow E."/>
            <person name="Marsischky G."/>
            <person name="Kolodner R.D."/>
            <person name="LaBaer J."/>
        </authorList>
    </citation>
    <scope>NUCLEOTIDE SEQUENCE [GENOMIC DNA]</scope>
    <source>
        <strain>ATCC 204508 / S288c</strain>
    </source>
</reference>
<reference key="5">
    <citation type="journal article" date="1993" name="J. Bacteriol.">
        <title>Glucose uptake and catabolite repression in dominant HTR1 mutants of Saccharomyces cerevisiae.</title>
        <authorList>
            <person name="Oezcan S."/>
            <person name="Freidel K."/>
            <person name="Leuker A."/>
            <person name="Ciriacy M."/>
        </authorList>
    </citation>
    <scope>FUNCTION</scope>
</reference>
<reference key="6">
    <citation type="journal article" date="1994" name="Genetics">
        <title>High-copy suppression of glucose transport defects by HXT4 and regulatory elements in the promoters of the HXT genes in Saccharomyces cerevisiae.</title>
        <authorList>
            <person name="Theodoris G."/>
            <person name="Fong N.M."/>
            <person name="Coons D.M."/>
            <person name="Bisson L.F."/>
        </authorList>
    </citation>
    <scope>IDENTIFICATION AS PROBABLE DUBIOUS PREDICTION</scope>
</reference>
<evidence type="ECO:0000256" key="1">
    <source>
        <dbReference type="SAM" id="MobiDB-lite"/>
    </source>
</evidence>
<evidence type="ECO:0000269" key="2">
    <source>
    </source>
</evidence>
<evidence type="ECO:0000305" key="3">
    <source>
    </source>
</evidence>
<name>AHT1_YEAST</name>
<dbReference type="EMBL" id="X59464">
    <property type="protein sequence ID" value="CAA42071.1"/>
    <property type="molecule type" value="Genomic_DNA"/>
</dbReference>
<dbReference type="EMBL" id="U00060">
    <property type="protein sequence ID" value="AAB68925.1"/>
    <property type="molecule type" value="Genomic_DNA"/>
</dbReference>
<dbReference type="EMBL" id="AY693252">
    <property type="protein sequence ID" value="AAT93271.1"/>
    <property type="molecule type" value="Genomic_DNA"/>
</dbReference>
<dbReference type="EMBL" id="BK006934">
    <property type="protein sequence ID" value="DAA80259.1"/>
    <property type="molecule type" value="Genomic_DNA"/>
</dbReference>
<dbReference type="PIR" id="S17005">
    <property type="entry name" value="S17005"/>
</dbReference>
<dbReference type="RefSeq" id="NP_001335739.1">
    <property type="nucleotide sequence ID" value="NM_001348818.1"/>
</dbReference>
<dbReference type="FunCoup" id="P29589">
    <property type="interactions" value="20"/>
</dbReference>
<dbReference type="STRING" id="4932.YHR093W"/>
<dbReference type="PaxDb" id="4932-YHR093W"/>
<dbReference type="EnsemblFungi" id="YHR093W_mRNA">
    <property type="protein sequence ID" value="YHR093W"/>
    <property type="gene ID" value="YHR093W"/>
</dbReference>
<dbReference type="GeneID" id="856493"/>
<dbReference type="AGR" id="SGD:S000001135"/>
<dbReference type="SGD" id="S000001135">
    <property type="gene designation" value="AHT1"/>
</dbReference>
<dbReference type="HOGENOM" id="CLU_134598_0_0_1"/>
<dbReference type="InParanoid" id="P29589"/>
<dbReference type="OMA" id="DIFLPCF"/>
<dbReference type="OrthoDB" id="4063965at2759"/>
<dbReference type="PRO" id="PR:P29589"/>
<dbReference type="Proteomes" id="UP000002311">
    <property type="component" value="Chromosome VIII"/>
</dbReference>
<dbReference type="RNAct" id="P29589">
    <property type="molecule type" value="protein"/>
</dbReference>
<feature type="chain" id="PRO_0000064511" description="Hexose transport activator protein">
    <location>
        <begin position="1"/>
        <end position="182"/>
    </location>
</feature>
<feature type="region of interest" description="Disordered" evidence="1">
    <location>
        <begin position="46"/>
        <end position="65"/>
    </location>
</feature>
<gene>
    <name type="primary">AHT1</name>
    <name type="ordered locus">YHR093W</name>
</gene>
<accession>P29589</accession>
<accession>A0A1S0SZW8</accession>
<accession>P38807</accession>
<keyword id="KW-1185">Reference proteome</keyword>
<protein>
    <recommendedName>
        <fullName>Hexose transport activator protein</fullName>
    </recommendedName>
</protein>
<sequence>MDCKIKAAGKNSGIFHEGGTKSSKSFLTVFIRSVFPLSPSFPAGGGIWGPMEKKPGGVGKKKGSEKKTAQGNIFFSTERDAGQEKCGILYKHCFSILYGFFWKKADKPKEKTGNGSGLGIVFPIGQKKIPEPADSDIFLPCFRYAAASDFTKAKRFLVEITAVYWVSLEAQPSSASCLFILI</sequence>
<organism>
    <name type="scientific">Saccharomyces cerevisiae (strain ATCC 204508 / S288c)</name>
    <name type="common">Baker's yeast</name>
    <dbReference type="NCBI Taxonomy" id="559292"/>
    <lineage>
        <taxon>Eukaryota</taxon>
        <taxon>Fungi</taxon>
        <taxon>Dikarya</taxon>
        <taxon>Ascomycota</taxon>
        <taxon>Saccharomycotina</taxon>
        <taxon>Saccharomycetes</taxon>
        <taxon>Saccharomycetales</taxon>
        <taxon>Saccharomycetaceae</taxon>
        <taxon>Saccharomyces</taxon>
    </lineage>
</organism>
<proteinExistence type="predicted"/>
<comment type="function">
    <text evidence="2">Multicopy expression suppresses glucose-uptake defects in various yeast mutants.</text>
</comment>
<comment type="caution">
    <text evidence="3">Present in the 5'-UTR of low-affinity glucose transporter HXT4, the multicopy suppression phenotype is probably due to the presence of an HXT4 regulatory element in this region.</text>
</comment>